<accession>B4MU83</accession>
<feature type="signal peptide" evidence="5">
    <location>
        <begin position="1"/>
        <end position="16"/>
    </location>
</feature>
<feature type="chain" id="PRO_0000364003" description="Glutamate [NMDA] receptor subunit 1" evidence="5">
    <location>
        <begin position="17"/>
        <end position="982"/>
    </location>
</feature>
<feature type="topological domain" description="Extracellular" evidence="5">
    <location>
        <begin position="17"/>
        <end position="561"/>
    </location>
</feature>
<feature type="transmembrane region" description="Helical" evidence="5">
    <location>
        <begin position="562"/>
        <end position="582"/>
    </location>
</feature>
<feature type="topological domain" description="Cytoplasmic" evidence="5">
    <location>
        <begin position="583"/>
        <end position="639"/>
    </location>
</feature>
<feature type="transmembrane region" description="Helical" evidence="5">
    <location>
        <begin position="640"/>
        <end position="660"/>
    </location>
</feature>
<feature type="topological domain" description="Extracellular" evidence="5">
    <location>
        <begin position="661"/>
        <end position="819"/>
    </location>
</feature>
<feature type="transmembrane region" description="Helical" evidence="5">
    <location>
        <begin position="820"/>
        <end position="840"/>
    </location>
</feature>
<feature type="topological domain" description="Cytoplasmic" evidence="5">
    <location>
        <begin position="841"/>
        <end position="982"/>
    </location>
</feature>
<feature type="region of interest" description="Disordered" evidence="6">
    <location>
        <begin position="934"/>
        <end position="982"/>
    </location>
</feature>
<feature type="compositionally biased region" description="Polar residues" evidence="6">
    <location>
        <begin position="972"/>
        <end position="982"/>
    </location>
</feature>
<feature type="binding site" evidence="2">
    <location>
        <begin position="518"/>
        <end position="520"/>
    </location>
    <ligand>
        <name>glycine</name>
        <dbReference type="ChEBI" id="CHEBI:57305"/>
    </ligand>
</feature>
<feature type="binding site" evidence="2">
    <location>
        <position position="525"/>
    </location>
    <ligand>
        <name>glycine</name>
        <dbReference type="ChEBI" id="CHEBI:57305"/>
    </ligand>
</feature>
<feature type="binding site" evidence="2">
    <location>
        <position position="691"/>
    </location>
    <ligand>
        <name>glycine</name>
        <dbReference type="ChEBI" id="CHEBI:57305"/>
    </ligand>
</feature>
<feature type="binding site" evidence="2">
    <location>
        <position position="735"/>
    </location>
    <ligand>
        <name>glycine</name>
        <dbReference type="ChEBI" id="CHEBI:57305"/>
    </ligand>
</feature>
<feature type="glycosylation site" description="N-linked (GlcNAc...) asparagine" evidence="5">
    <location>
        <position position="247"/>
    </location>
</feature>
<feature type="glycosylation site" description="N-linked (GlcNAc...) asparagine" evidence="5">
    <location>
        <position position="303"/>
    </location>
</feature>
<feature type="glycosylation site" description="N-linked (GlcNAc...) asparagine" evidence="5">
    <location>
        <position position="334"/>
    </location>
</feature>
<feature type="glycosylation site" description="N-linked (GlcNAc...) asparagine" evidence="5">
    <location>
        <position position="386"/>
    </location>
</feature>
<feature type="glycosylation site" description="N-linked (GlcNAc...) asparagine" evidence="5">
    <location>
        <position position="443"/>
    </location>
</feature>
<feature type="glycosylation site" description="N-linked (GlcNAc...) asparagine" evidence="5">
    <location>
        <position position="470"/>
    </location>
</feature>
<feature type="glycosylation site" description="N-linked (GlcNAc...) asparagine" evidence="5">
    <location>
        <position position="490"/>
    </location>
</feature>
<feature type="glycosylation site" description="N-linked (GlcNAc...) asparagine" evidence="5">
    <location>
        <position position="681"/>
    </location>
</feature>
<feature type="disulfide bond" description="Interchain" evidence="3">
    <location>
        <position position="82"/>
    </location>
</feature>
<keyword id="KW-0106">Calcium</keyword>
<keyword id="KW-1003">Cell membrane</keyword>
<keyword id="KW-1015">Disulfide bond</keyword>
<keyword id="KW-0325">Glycoprotein</keyword>
<keyword id="KW-0407">Ion channel</keyword>
<keyword id="KW-0406">Ion transport</keyword>
<keyword id="KW-1071">Ligand-gated ion channel</keyword>
<keyword id="KW-0460">Magnesium</keyword>
<keyword id="KW-0472">Membrane</keyword>
<keyword id="KW-0597">Phosphoprotein</keyword>
<keyword id="KW-0628">Postsynaptic cell membrane</keyword>
<keyword id="KW-0675">Receptor</keyword>
<keyword id="KW-1185">Reference proteome</keyword>
<keyword id="KW-0732">Signal</keyword>
<keyword id="KW-0770">Synapse</keyword>
<keyword id="KW-0812">Transmembrane</keyword>
<keyword id="KW-1133">Transmembrane helix</keyword>
<keyword id="KW-0813">Transport</keyword>
<protein>
    <recommendedName>
        <fullName evidence="4">Glutamate [NMDA] receptor subunit 1</fullName>
    </recommendedName>
</protein>
<evidence type="ECO:0000250" key="1"/>
<evidence type="ECO:0000250" key="2">
    <source>
        <dbReference type="UniProtKB" id="P35439"/>
    </source>
</evidence>
<evidence type="ECO:0000250" key="3">
    <source>
        <dbReference type="UniProtKB" id="Q05586"/>
    </source>
</evidence>
<evidence type="ECO:0000250" key="4">
    <source>
        <dbReference type="UniProtKB" id="Q24418"/>
    </source>
</evidence>
<evidence type="ECO:0000255" key="5"/>
<evidence type="ECO:0000256" key="6">
    <source>
        <dbReference type="SAM" id="MobiDB-lite"/>
    </source>
</evidence>
<evidence type="ECO:0000305" key="7"/>
<evidence type="ECO:0000312" key="8">
    <source>
        <dbReference type="EMBL" id="EDW75672.1"/>
    </source>
</evidence>
<dbReference type="EMBL" id="CH963852">
    <property type="protein sequence ID" value="EDW75672.1"/>
    <property type="molecule type" value="Genomic_DNA"/>
</dbReference>
<dbReference type="RefSeq" id="XP_002064686.1">
    <property type="nucleotide sequence ID" value="XM_002064650.2"/>
</dbReference>
<dbReference type="SMR" id="B4MU83"/>
<dbReference type="STRING" id="7260.B4MU83"/>
<dbReference type="GlyCosmos" id="B4MU83">
    <property type="glycosylation" value="8 sites, No reported glycans"/>
</dbReference>
<dbReference type="EnsemblMetazoa" id="FBtr0254355">
    <property type="protein sequence ID" value="FBpp0252847"/>
    <property type="gene ID" value="FBgn0225666"/>
</dbReference>
<dbReference type="EnsemblMetazoa" id="XM_002064650.4">
    <property type="protein sequence ID" value="XP_002064686.2"/>
    <property type="gene ID" value="LOC6641663"/>
</dbReference>
<dbReference type="GeneID" id="6641663"/>
<dbReference type="KEGG" id="dwi:6641663"/>
<dbReference type="CTD" id="40665"/>
<dbReference type="eggNOG" id="KOG4440">
    <property type="taxonomic scope" value="Eukaryota"/>
</dbReference>
<dbReference type="HOGENOM" id="CLU_007257_2_0_1"/>
<dbReference type="OMA" id="FANNTPD"/>
<dbReference type="OrthoDB" id="5984008at2759"/>
<dbReference type="PhylomeDB" id="B4MU83"/>
<dbReference type="Proteomes" id="UP000007798">
    <property type="component" value="Unassembled WGS sequence"/>
</dbReference>
<dbReference type="GO" id="GO:0017146">
    <property type="term" value="C:NMDA selective glutamate receptor complex"/>
    <property type="evidence" value="ECO:0000250"/>
    <property type="project" value="UniProtKB"/>
</dbReference>
<dbReference type="GO" id="GO:0014069">
    <property type="term" value="C:postsynaptic density"/>
    <property type="evidence" value="ECO:0007669"/>
    <property type="project" value="UniProtKB-SubCell"/>
</dbReference>
<dbReference type="GO" id="GO:0045211">
    <property type="term" value="C:postsynaptic membrane"/>
    <property type="evidence" value="ECO:0000250"/>
    <property type="project" value="UniProtKB"/>
</dbReference>
<dbReference type="GO" id="GO:0004970">
    <property type="term" value="F:glutamate-gated receptor activity"/>
    <property type="evidence" value="ECO:0000250"/>
    <property type="project" value="UniProtKB"/>
</dbReference>
<dbReference type="GO" id="GO:0055074">
    <property type="term" value="P:calcium ion homeostasis"/>
    <property type="evidence" value="ECO:0000250"/>
    <property type="project" value="UniProtKB"/>
</dbReference>
<dbReference type="GO" id="GO:0007268">
    <property type="term" value="P:chemical synaptic transmission"/>
    <property type="evidence" value="ECO:0000250"/>
    <property type="project" value="UniProtKB"/>
</dbReference>
<dbReference type="GO" id="GO:0035235">
    <property type="term" value="P:ionotropic glutamate receptor signaling pathway"/>
    <property type="evidence" value="ECO:0000250"/>
    <property type="project" value="UniProtKB"/>
</dbReference>
<dbReference type="GO" id="GO:0007616">
    <property type="term" value="P:long-term memory"/>
    <property type="evidence" value="ECO:0000250"/>
    <property type="project" value="UniProtKB"/>
</dbReference>
<dbReference type="GO" id="GO:0008355">
    <property type="term" value="P:olfactory learning"/>
    <property type="evidence" value="ECO:0000250"/>
    <property type="project" value="UniProtKB"/>
</dbReference>
<dbReference type="GO" id="GO:0042391">
    <property type="term" value="P:regulation of membrane potential"/>
    <property type="evidence" value="ECO:0000250"/>
    <property type="project" value="UniProtKB"/>
</dbReference>
<dbReference type="CDD" id="cd06379">
    <property type="entry name" value="PBP1_iGluR_NMDA_NR1"/>
    <property type="match status" value="1"/>
</dbReference>
<dbReference type="CDD" id="cd13719">
    <property type="entry name" value="PBP2_iGluR_NMDA_Nr1"/>
    <property type="match status" value="1"/>
</dbReference>
<dbReference type="FunFam" id="3.40.190.10:FF:000177">
    <property type="entry name" value="Glutamate [NMDA] receptor subunit 1"/>
    <property type="match status" value="1"/>
</dbReference>
<dbReference type="FunFam" id="3.40.50.2300:FF:000266">
    <property type="entry name" value="Glutamate [NMDA] receptor subunit 1"/>
    <property type="match status" value="1"/>
</dbReference>
<dbReference type="FunFam" id="3.40.190.10:FF:000010">
    <property type="entry name" value="glutamate receptor ionotropic, NMDA 1 isoform X1"/>
    <property type="match status" value="1"/>
</dbReference>
<dbReference type="FunFam" id="3.40.50.2300:FF:000025">
    <property type="entry name" value="glutamate receptor ionotropic, NMDA 1 isoform X1"/>
    <property type="match status" value="1"/>
</dbReference>
<dbReference type="Gene3D" id="1.10.287.70">
    <property type="match status" value="1"/>
</dbReference>
<dbReference type="Gene3D" id="3.40.50.2300">
    <property type="match status" value="2"/>
</dbReference>
<dbReference type="Gene3D" id="3.40.190.10">
    <property type="entry name" value="Periplasmic binding protein-like II"/>
    <property type="match status" value="2"/>
</dbReference>
<dbReference type="InterPro" id="IPR001828">
    <property type="entry name" value="ANF_lig-bd_rcpt"/>
</dbReference>
<dbReference type="InterPro" id="IPR018882">
    <property type="entry name" value="CaM-bd_C0_NMDA_rcpt_NR1"/>
</dbReference>
<dbReference type="InterPro" id="IPR019594">
    <property type="entry name" value="Glu/Gly-bd"/>
</dbReference>
<dbReference type="InterPro" id="IPR001508">
    <property type="entry name" value="Iono_Glu_rcpt_met"/>
</dbReference>
<dbReference type="InterPro" id="IPR015683">
    <property type="entry name" value="Ionotropic_Glu_rcpt"/>
</dbReference>
<dbReference type="InterPro" id="IPR001320">
    <property type="entry name" value="Iontro_rcpt_C"/>
</dbReference>
<dbReference type="InterPro" id="IPR049872">
    <property type="entry name" value="NMDA1-like_ligand-bd"/>
</dbReference>
<dbReference type="InterPro" id="IPR049873">
    <property type="entry name" value="NMDA1-like_N"/>
</dbReference>
<dbReference type="InterPro" id="IPR028082">
    <property type="entry name" value="Peripla_BP_I"/>
</dbReference>
<dbReference type="PANTHER" id="PTHR18966">
    <property type="entry name" value="IONOTROPIC GLUTAMATE RECEPTOR"/>
    <property type="match status" value="1"/>
</dbReference>
<dbReference type="Pfam" id="PF01094">
    <property type="entry name" value="ANF_receptor"/>
    <property type="match status" value="1"/>
</dbReference>
<dbReference type="Pfam" id="PF10562">
    <property type="entry name" value="CaM_bdg_C0"/>
    <property type="match status" value="1"/>
</dbReference>
<dbReference type="Pfam" id="PF00060">
    <property type="entry name" value="Lig_chan"/>
    <property type="match status" value="1"/>
</dbReference>
<dbReference type="Pfam" id="PF10613">
    <property type="entry name" value="Lig_chan-Glu_bd"/>
    <property type="match status" value="1"/>
</dbReference>
<dbReference type="PRINTS" id="PR00177">
    <property type="entry name" value="NMDARECEPTOR"/>
</dbReference>
<dbReference type="SMART" id="SM00918">
    <property type="entry name" value="Lig_chan-Glu_bd"/>
    <property type="match status" value="1"/>
</dbReference>
<dbReference type="SMART" id="SM00079">
    <property type="entry name" value="PBPe"/>
    <property type="match status" value="1"/>
</dbReference>
<dbReference type="SUPFAM" id="SSF53822">
    <property type="entry name" value="Periplasmic binding protein-like I"/>
    <property type="match status" value="1"/>
</dbReference>
<dbReference type="SUPFAM" id="SSF53850">
    <property type="entry name" value="Periplasmic binding protein-like II"/>
    <property type="match status" value="1"/>
</dbReference>
<dbReference type="SUPFAM" id="SSF81324">
    <property type="entry name" value="Voltage-gated potassium channels"/>
    <property type="match status" value="1"/>
</dbReference>
<sequence>MAFAVWFLSTFVIVAAQRHMALEHEGTYNIGGVLTNSDSEEHFRTTIAHLNFDQQYVPRKVTYYEKTIRMDKNPIKTVFNVCNKLIEKRVYAVVVSHEQTSGDLSPAAVSYTSGFYSIPVIGISSRDAAFSDKNIHVSFLRTVPPYYHQADVWLEMLSHFSYTKVIIIHSSDTDGRAILGRFQTTSQTYYDDVDVRATVEMIVEFEPKLTSFSEHLTYMKTAQSRVYLMYASTEDAQIIFRDARDHNMTQEGHVWIVTEQALFANNTPEGVLGLQLEHAHSDKGHIRDSVYVLASAIKEMISNETIAEAPKDCGDSAVNWESGKRLFQYLKTRNITGETGQVAFDDNGDRIYAGYDVINIRENQKQHVVGKFSYDNMRAKMRMKINDSEIIWAGKQKRKPEGIMIPTHLKLLTIEEKPFVYVRRMGDDEFHCEPNERPCPLFNTTDATANEFCCSGYCIDLLIELAKRINFTYDLALSPDGQFGHYILRNNTGATLRKEWTGLIGQLVNERADMIVAPLTINPERAEYIEFSKPFKYQGITILEKKPSRSSTLVSFLQPFSNTLWILVMVSVHVVALVLYLLDRFSPFGRFKLSHSDSNEEKALNLSSAVWFAWGVLLNSGIGEGTPRSFSARVLGMVWAGFAMIIVASYTANLAAFLVLERPKTKLSGINDARLRNTMENLTCATVKGSSVDMYFRRQVELSNMYRTMEANNYATAEHAIQDVKKGKLMAFIWDSSRLEYEASKDCELVTAGELFGRSGYGIGLQKGSPWTDAVTLAILEFHESGFMEKLDKQWIFHGHVQQNCELFEKTPNTLGLKNMAGVFILVGVGIAGGVGLIIIEVIYKKHQVKKQKRLDIARHAADKWRGTIEKRKTIRASLAMQRQYNVGLNSRAPGTISLAVDKKRYPRLSQRMGPERAWPGDAAEVLRMRRPYEIGKPGQSPKVIGGPPHPMLGKTRPQAQQNLLPPRYSPGYTSDVSHLVV</sequence>
<reference evidence="8" key="1">
    <citation type="journal article" date="2007" name="Nature">
        <title>Evolution of genes and genomes on the Drosophila phylogeny.</title>
        <authorList>
            <consortium name="Drosophila 12 genomes consortium"/>
        </authorList>
    </citation>
    <scope>NUCLEOTIDE SEQUENCE [LARGE SCALE GENOMIC DNA]</scope>
    <source>
        <strain evidence="8">Tucson 14030-0811.24</strain>
    </source>
</reference>
<organism>
    <name type="scientific">Drosophila willistoni</name>
    <name type="common">Fruit fly</name>
    <dbReference type="NCBI Taxonomy" id="7260"/>
    <lineage>
        <taxon>Eukaryota</taxon>
        <taxon>Metazoa</taxon>
        <taxon>Ecdysozoa</taxon>
        <taxon>Arthropoda</taxon>
        <taxon>Hexapoda</taxon>
        <taxon>Insecta</taxon>
        <taxon>Pterygota</taxon>
        <taxon>Neoptera</taxon>
        <taxon>Endopterygota</taxon>
        <taxon>Diptera</taxon>
        <taxon>Brachycera</taxon>
        <taxon>Muscomorpha</taxon>
        <taxon>Ephydroidea</taxon>
        <taxon>Drosophilidae</taxon>
        <taxon>Drosophila</taxon>
        <taxon>Sophophora</taxon>
    </lineage>
</organism>
<comment type="function">
    <text evidence="2 4">NMDA receptor subtype of glutamate-gated ion channels with high calcium permeability and voltage-dependent sensitivity to magnesium. Mediated by glycine. This protein plays a key role in synaptic plasticity, synaptogenesis, excitotoxicity, memory acquisition and learning. It mediates neuronal functions in glutamate neurotransmission. Is involved in the cell surface targeting of NMDA receptors. Plays a role in associative learning and in long-term memory consolidation (By similarity).</text>
</comment>
<comment type="subunit">
    <text evidence="1">Forms a heteromeric NMDA channel with Nmdar2.</text>
</comment>
<comment type="subcellular location">
    <subcellularLocation>
        <location evidence="4">Cell membrane</location>
        <topology evidence="4">Multi-pass membrane protein</topology>
    </subcellularLocation>
    <subcellularLocation>
        <location evidence="4">Postsynaptic cell membrane</location>
    </subcellularLocation>
    <subcellularLocation>
        <location evidence="4">Postsynaptic density</location>
    </subcellularLocation>
</comment>
<comment type="similarity">
    <text evidence="7">Belongs to the glutamate-gated ion channel (TC 1.A.10.1) family.</text>
</comment>
<proteinExistence type="inferred from homology"/>
<gene>
    <name evidence="4" type="primary">Nmdar1</name>
    <name type="ORF">GK23704</name>
</gene>
<name>NMDA1_DROWI</name>